<gene>
    <name evidence="1" type="primary">ligA</name>
    <name type="ordered locus">BPSL2164</name>
</gene>
<protein>
    <recommendedName>
        <fullName evidence="1">DNA ligase</fullName>
        <ecNumber evidence="1">6.5.1.2</ecNumber>
    </recommendedName>
    <alternativeName>
        <fullName evidence="1">Polydeoxyribonucleotide synthase [NAD(+)]</fullName>
    </alternativeName>
</protein>
<evidence type="ECO:0000255" key="1">
    <source>
        <dbReference type="HAMAP-Rule" id="MF_01588"/>
    </source>
</evidence>
<accession>Q63T07</accession>
<comment type="function">
    <text evidence="1">DNA ligase that catalyzes the formation of phosphodiester linkages between 5'-phosphoryl and 3'-hydroxyl groups in double-stranded DNA using NAD as a coenzyme and as the energy source for the reaction. It is essential for DNA replication and repair of damaged DNA.</text>
</comment>
<comment type="catalytic activity">
    <reaction evidence="1">
        <text>NAD(+) + (deoxyribonucleotide)n-3'-hydroxyl + 5'-phospho-(deoxyribonucleotide)m = (deoxyribonucleotide)n+m + AMP + beta-nicotinamide D-nucleotide.</text>
        <dbReference type="EC" id="6.5.1.2"/>
    </reaction>
</comment>
<comment type="cofactor">
    <cofactor evidence="1">
        <name>Mg(2+)</name>
        <dbReference type="ChEBI" id="CHEBI:18420"/>
    </cofactor>
    <cofactor evidence="1">
        <name>Mn(2+)</name>
        <dbReference type="ChEBI" id="CHEBI:29035"/>
    </cofactor>
</comment>
<comment type="similarity">
    <text evidence="1">Belongs to the NAD-dependent DNA ligase family. LigA subfamily.</text>
</comment>
<reference key="1">
    <citation type="journal article" date="2004" name="Proc. Natl. Acad. Sci. U.S.A.">
        <title>Genomic plasticity of the causative agent of melioidosis, Burkholderia pseudomallei.</title>
        <authorList>
            <person name="Holden M.T.G."/>
            <person name="Titball R.W."/>
            <person name="Peacock S.J."/>
            <person name="Cerdeno-Tarraga A.-M."/>
            <person name="Atkins T."/>
            <person name="Crossman L.C."/>
            <person name="Pitt T."/>
            <person name="Churcher C."/>
            <person name="Mungall K.L."/>
            <person name="Bentley S.D."/>
            <person name="Sebaihia M."/>
            <person name="Thomson N.R."/>
            <person name="Bason N."/>
            <person name="Beacham I.R."/>
            <person name="Brooks K."/>
            <person name="Brown K.A."/>
            <person name="Brown N.F."/>
            <person name="Challis G.L."/>
            <person name="Cherevach I."/>
            <person name="Chillingworth T."/>
            <person name="Cronin A."/>
            <person name="Crossett B."/>
            <person name="Davis P."/>
            <person name="DeShazer D."/>
            <person name="Feltwell T."/>
            <person name="Fraser A."/>
            <person name="Hance Z."/>
            <person name="Hauser H."/>
            <person name="Holroyd S."/>
            <person name="Jagels K."/>
            <person name="Keith K.E."/>
            <person name="Maddison M."/>
            <person name="Moule S."/>
            <person name="Price C."/>
            <person name="Quail M.A."/>
            <person name="Rabbinowitsch E."/>
            <person name="Rutherford K."/>
            <person name="Sanders M."/>
            <person name="Simmonds M."/>
            <person name="Songsivilai S."/>
            <person name="Stevens K."/>
            <person name="Tumapa S."/>
            <person name="Vesaratchavest M."/>
            <person name="Whitehead S."/>
            <person name="Yeats C."/>
            <person name="Barrell B.G."/>
            <person name="Oyston P.C.F."/>
            <person name="Parkhill J."/>
        </authorList>
    </citation>
    <scope>NUCLEOTIDE SEQUENCE [LARGE SCALE GENOMIC DNA]</scope>
    <source>
        <strain>K96243</strain>
    </source>
</reference>
<proteinExistence type="inferred from homology"/>
<sequence>MARSPVEPPASQPAKRAAWLRAELERANYAYYVLDQPDLPDAEYDRLFVELQRIEAEHPDLVTPDSPTQRVGGEAASGFTPVVHDKPMLSLNNGFADEDVIAFDKRVADGLDKATDLAGTVTEPVEYACELKFDGLAISLRYENGRFVQASTRGDGTTGEDVTENIRTIRAIPLTLKGKRIPRMLDVRGEVLMFKRDFARLNERQRAAGQREFANPRNAAAGSLRQLDSKITASRPLSFFAYGIGVLDGADMPDTHSGLLDWYETLGLPVNRERAVVRGAAGLLAFFHSVGERRESLPYDIDGVVYKVNRRDEQDRLGFVSRAPRFALAHKFPAQEALTKLIAIDVQVGRTGAITPVARLEPVFVGGATVTNATLHNEDEVRRKDIRIGDTVIVRRAGDVIPEVVSAVLDRRPADAQEFVMPTECPECGSRIERLPDEAIARCTGGLFCPAQRKQALWHFAQRRALDIDGLGEKIIDQLVEQNLVRTPADLFNLGFSTLVGLDRFAEKSARNLIDSLEKAKHTTLARFIYALGIRHVGESTAKDLAKHFGSLDPIMDAPIDALLEVNDVGPIVAESIHQFFAEEHNRTVIEQLRARGKVTWPEGPPAPRAPQGVLAGKTVVLTGTLPTLTREAAKEMLEAAGAKVAGSVSKKTDYVVAGADAGSKLAKAEELGIPVLDEAGMHTLLEGHAR</sequence>
<feature type="chain" id="PRO_0000313165" description="DNA ligase">
    <location>
        <begin position="1"/>
        <end position="691"/>
    </location>
</feature>
<feature type="domain" description="BRCT" evidence="1">
    <location>
        <begin position="610"/>
        <end position="691"/>
    </location>
</feature>
<feature type="active site" description="N6-AMP-lysine intermediate" evidence="1">
    <location>
        <position position="132"/>
    </location>
</feature>
<feature type="binding site" evidence="1">
    <location>
        <begin position="41"/>
        <end position="45"/>
    </location>
    <ligand>
        <name>NAD(+)</name>
        <dbReference type="ChEBI" id="CHEBI:57540"/>
    </ligand>
</feature>
<feature type="binding site" evidence="1">
    <location>
        <begin position="90"/>
        <end position="91"/>
    </location>
    <ligand>
        <name>NAD(+)</name>
        <dbReference type="ChEBI" id="CHEBI:57540"/>
    </ligand>
</feature>
<feature type="binding site" evidence="1">
    <location>
        <position position="130"/>
    </location>
    <ligand>
        <name>NAD(+)</name>
        <dbReference type="ChEBI" id="CHEBI:57540"/>
    </ligand>
</feature>
<feature type="binding site" evidence="1">
    <location>
        <position position="153"/>
    </location>
    <ligand>
        <name>NAD(+)</name>
        <dbReference type="ChEBI" id="CHEBI:57540"/>
    </ligand>
</feature>
<feature type="binding site" evidence="1">
    <location>
        <position position="190"/>
    </location>
    <ligand>
        <name>NAD(+)</name>
        <dbReference type="ChEBI" id="CHEBI:57540"/>
    </ligand>
</feature>
<feature type="binding site" evidence="1">
    <location>
        <position position="307"/>
    </location>
    <ligand>
        <name>NAD(+)</name>
        <dbReference type="ChEBI" id="CHEBI:57540"/>
    </ligand>
</feature>
<feature type="binding site" evidence="1">
    <location>
        <position position="331"/>
    </location>
    <ligand>
        <name>NAD(+)</name>
        <dbReference type="ChEBI" id="CHEBI:57540"/>
    </ligand>
</feature>
<feature type="binding site" evidence="1">
    <location>
        <position position="425"/>
    </location>
    <ligand>
        <name>Zn(2+)</name>
        <dbReference type="ChEBI" id="CHEBI:29105"/>
    </ligand>
</feature>
<feature type="binding site" evidence="1">
    <location>
        <position position="428"/>
    </location>
    <ligand>
        <name>Zn(2+)</name>
        <dbReference type="ChEBI" id="CHEBI:29105"/>
    </ligand>
</feature>
<feature type="binding site" evidence="1">
    <location>
        <position position="443"/>
    </location>
    <ligand>
        <name>Zn(2+)</name>
        <dbReference type="ChEBI" id="CHEBI:29105"/>
    </ligand>
</feature>
<feature type="binding site" evidence="1">
    <location>
        <position position="449"/>
    </location>
    <ligand>
        <name>Zn(2+)</name>
        <dbReference type="ChEBI" id="CHEBI:29105"/>
    </ligand>
</feature>
<organism>
    <name type="scientific">Burkholderia pseudomallei (strain K96243)</name>
    <dbReference type="NCBI Taxonomy" id="272560"/>
    <lineage>
        <taxon>Bacteria</taxon>
        <taxon>Pseudomonadati</taxon>
        <taxon>Pseudomonadota</taxon>
        <taxon>Betaproteobacteria</taxon>
        <taxon>Burkholderiales</taxon>
        <taxon>Burkholderiaceae</taxon>
        <taxon>Burkholderia</taxon>
        <taxon>pseudomallei group</taxon>
    </lineage>
</organism>
<dbReference type="EC" id="6.5.1.2" evidence="1"/>
<dbReference type="EMBL" id="BX571965">
    <property type="protein sequence ID" value="CAH36166.1"/>
    <property type="molecule type" value="Genomic_DNA"/>
</dbReference>
<dbReference type="RefSeq" id="WP_009937986.1">
    <property type="nucleotide sequence ID" value="NC_006350.1"/>
</dbReference>
<dbReference type="RefSeq" id="YP_108759.1">
    <property type="nucleotide sequence ID" value="NC_006350.1"/>
</dbReference>
<dbReference type="SMR" id="Q63T07"/>
<dbReference type="STRING" id="272560.BPSL2164"/>
<dbReference type="KEGG" id="bps:BPSL2164"/>
<dbReference type="PATRIC" id="fig|272560.51.peg.3287"/>
<dbReference type="eggNOG" id="COG0272">
    <property type="taxonomic scope" value="Bacteria"/>
</dbReference>
<dbReference type="Proteomes" id="UP000000605">
    <property type="component" value="Chromosome 1"/>
</dbReference>
<dbReference type="GO" id="GO:0005829">
    <property type="term" value="C:cytosol"/>
    <property type="evidence" value="ECO:0007669"/>
    <property type="project" value="TreeGrafter"/>
</dbReference>
<dbReference type="GO" id="GO:0003677">
    <property type="term" value="F:DNA binding"/>
    <property type="evidence" value="ECO:0007669"/>
    <property type="project" value="InterPro"/>
</dbReference>
<dbReference type="GO" id="GO:0003911">
    <property type="term" value="F:DNA ligase (NAD+) activity"/>
    <property type="evidence" value="ECO:0007669"/>
    <property type="project" value="UniProtKB-UniRule"/>
</dbReference>
<dbReference type="GO" id="GO:0046872">
    <property type="term" value="F:metal ion binding"/>
    <property type="evidence" value="ECO:0007669"/>
    <property type="project" value="UniProtKB-KW"/>
</dbReference>
<dbReference type="GO" id="GO:0006281">
    <property type="term" value="P:DNA repair"/>
    <property type="evidence" value="ECO:0007669"/>
    <property type="project" value="UniProtKB-KW"/>
</dbReference>
<dbReference type="GO" id="GO:0006260">
    <property type="term" value="P:DNA replication"/>
    <property type="evidence" value="ECO:0007669"/>
    <property type="project" value="UniProtKB-KW"/>
</dbReference>
<dbReference type="CDD" id="cd17748">
    <property type="entry name" value="BRCT_DNA_ligase_like"/>
    <property type="match status" value="1"/>
</dbReference>
<dbReference type="CDD" id="cd00114">
    <property type="entry name" value="LIGANc"/>
    <property type="match status" value="1"/>
</dbReference>
<dbReference type="FunFam" id="1.10.150.20:FF:000006">
    <property type="entry name" value="DNA ligase"/>
    <property type="match status" value="1"/>
</dbReference>
<dbReference type="FunFam" id="1.10.150.20:FF:000007">
    <property type="entry name" value="DNA ligase"/>
    <property type="match status" value="1"/>
</dbReference>
<dbReference type="FunFam" id="1.10.287.610:FF:000002">
    <property type="entry name" value="DNA ligase"/>
    <property type="match status" value="1"/>
</dbReference>
<dbReference type="FunFam" id="2.40.50.140:FF:000012">
    <property type="entry name" value="DNA ligase"/>
    <property type="match status" value="1"/>
</dbReference>
<dbReference type="FunFam" id="3.30.470.30:FF:000001">
    <property type="entry name" value="DNA ligase"/>
    <property type="match status" value="1"/>
</dbReference>
<dbReference type="FunFam" id="3.40.50.10190:FF:000054">
    <property type="entry name" value="DNA ligase"/>
    <property type="match status" value="1"/>
</dbReference>
<dbReference type="Gene3D" id="6.20.10.30">
    <property type="match status" value="1"/>
</dbReference>
<dbReference type="Gene3D" id="1.10.150.20">
    <property type="entry name" value="5' to 3' exonuclease, C-terminal subdomain"/>
    <property type="match status" value="2"/>
</dbReference>
<dbReference type="Gene3D" id="3.40.50.10190">
    <property type="entry name" value="BRCT domain"/>
    <property type="match status" value="1"/>
</dbReference>
<dbReference type="Gene3D" id="3.30.470.30">
    <property type="entry name" value="DNA ligase/mRNA capping enzyme"/>
    <property type="match status" value="1"/>
</dbReference>
<dbReference type="Gene3D" id="1.10.287.610">
    <property type="entry name" value="Helix hairpin bin"/>
    <property type="match status" value="1"/>
</dbReference>
<dbReference type="Gene3D" id="2.40.50.140">
    <property type="entry name" value="Nucleic acid-binding proteins"/>
    <property type="match status" value="1"/>
</dbReference>
<dbReference type="HAMAP" id="MF_01588">
    <property type="entry name" value="DNA_ligase_A"/>
    <property type="match status" value="1"/>
</dbReference>
<dbReference type="InterPro" id="IPR001357">
    <property type="entry name" value="BRCT_dom"/>
</dbReference>
<dbReference type="InterPro" id="IPR036420">
    <property type="entry name" value="BRCT_dom_sf"/>
</dbReference>
<dbReference type="InterPro" id="IPR041663">
    <property type="entry name" value="DisA/LigA_HHH"/>
</dbReference>
<dbReference type="InterPro" id="IPR001679">
    <property type="entry name" value="DNA_ligase"/>
</dbReference>
<dbReference type="InterPro" id="IPR018239">
    <property type="entry name" value="DNA_ligase_AS"/>
</dbReference>
<dbReference type="InterPro" id="IPR033136">
    <property type="entry name" value="DNA_ligase_CS"/>
</dbReference>
<dbReference type="InterPro" id="IPR013839">
    <property type="entry name" value="DNAligase_adenylation"/>
</dbReference>
<dbReference type="InterPro" id="IPR013840">
    <property type="entry name" value="DNAligase_N"/>
</dbReference>
<dbReference type="InterPro" id="IPR003583">
    <property type="entry name" value="Hlx-hairpin-Hlx_DNA-bd_motif"/>
</dbReference>
<dbReference type="InterPro" id="IPR012340">
    <property type="entry name" value="NA-bd_OB-fold"/>
</dbReference>
<dbReference type="InterPro" id="IPR004150">
    <property type="entry name" value="NAD_DNA_ligase_OB"/>
</dbReference>
<dbReference type="InterPro" id="IPR010994">
    <property type="entry name" value="RuvA_2-like"/>
</dbReference>
<dbReference type="InterPro" id="IPR004149">
    <property type="entry name" value="Znf_DNAligase_C4"/>
</dbReference>
<dbReference type="NCBIfam" id="TIGR00575">
    <property type="entry name" value="dnlj"/>
    <property type="match status" value="1"/>
</dbReference>
<dbReference type="NCBIfam" id="NF005932">
    <property type="entry name" value="PRK07956.1"/>
    <property type="match status" value="1"/>
</dbReference>
<dbReference type="PANTHER" id="PTHR23389">
    <property type="entry name" value="CHROMOSOME TRANSMISSION FIDELITY FACTOR 18"/>
    <property type="match status" value="1"/>
</dbReference>
<dbReference type="PANTHER" id="PTHR23389:SF9">
    <property type="entry name" value="DNA LIGASE"/>
    <property type="match status" value="1"/>
</dbReference>
<dbReference type="Pfam" id="PF00533">
    <property type="entry name" value="BRCT"/>
    <property type="match status" value="1"/>
</dbReference>
<dbReference type="Pfam" id="PF01653">
    <property type="entry name" value="DNA_ligase_aden"/>
    <property type="match status" value="1"/>
</dbReference>
<dbReference type="Pfam" id="PF03120">
    <property type="entry name" value="DNA_ligase_OB"/>
    <property type="match status" value="1"/>
</dbReference>
<dbReference type="Pfam" id="PF03119">
    <property type="entry name" value="DNA_ligase_ZBD"/>
    <property type="match status" value="1"/>
</dbReference>
<dbReference type="Pfam" id="PF12826">
    <property type="entry name" value="HHH_2"/>
    <property type="match status" value="1"/>
</dbReference>
<dbReference type="Pfam" id="PF14520">
    <property type="entry name" value="HHH_5"/>
    <property type="match status" value="1"/>
</dbReference>
<dbReference type="Pfam" id="PF22745">
    <property type="entry name" value="Nlig-Ia"/>
    <property type="match status" value="1"/>
</dbReference>
<dbReference type="PIRSF" id="PIRSF001604">
    <property type="entry name" value="LigA"/>
    <property type="match status" value="1"/>
</dbReference>
<dbReference type="SMART" id="SM00292">
    <property type="entry name" value="BRCT"/>
    <property type="match status" value="1"/>
</dbReference>
<dbReference type="SMART" id="SM00278">
    <property type="entry name" value="HhH1"/>
    <property type="match status" value="4"/>
</dbReference>
<dbReference type="SMART" id="SM00532">
    <property type="entry name" value="LIGANc"/>
    <property type="match status" value="1"/>
</dbReference>
<dbReference type="SUPFAM" id="SSF52113">
    <property type="entry name" value="BRCT domain"/>
    <property type="match status" value="1"/>
</dbReference>
<dbReference type="SUPFAM" id="SSF56091">
    <property type="entry name" value="DNA ligase/mRNA capping enzyme, catalytic domain"/>
    <property type="match status" value="1"/>
</dbReference>
<dbReference type="SUPFAM" id="SSF50249">
    <property type="entry name" value="Nucleic acid-binding proteins"/>
    <property type="match status" value="1"/>
</dbReference>
<dbReference type="SUPFAM" id="SSF47781">
    <property type="entry name" value="RuvA domain 2-like"/>
    <property type="match status" value="1"/>
</dbReference>
<dbReference type="PROSITE" id="PS50172">
    <property type="entry name" value="BRCT"/>
    <property type="match status" value="1"/>
</dbReference>
<dbReference type="PROSITE" id="PS01055">
    <property type="entry name" value="DNA_LIGASE_N1"/>
    <property type="match status" value="1"/>
</dbReference>
<dbReference type="PROSITE" id="PS01056">
    <property type="entry name" value="DNA_LIGASE_N2"/>
    <property type="match status" value="1"/>
</dbReference>
<keyword id="KW-0227">DNA damage</keyword>
<keyword id="KW-0234">DNA repair</keyword>
<keyword id="KW-0235">DNA replication</keyword>
<keyword id="KW-0436">Ligase</keyword>
<keyword id="KW-0460">Magnesium</keyword>
<keyword id="KW-0464">Manganese</keyword>
<keyword id="KW-0479">Metal-binding</keyword>
<keyword id="KW-0520">NAD</keyword>
<keyword id="KW-1185">Reference proteome</keyword>
<keyword id="KW-0862">Zinc</keyword>
<name>DNLJ_BURPS</name>